<dbReference type="EC" id="2.1.1.-" evidence="1"/>
<dbReference type="EC" id="2.1.1.35" evidence="1"/>
<dbReference type="EMBL" id="CP000950">
    <property type="protein sequence ID" value="ACA70333.1"/>
    <property type="molecule type" value="Genomic_DNA"/>
</dbReference>
<dbReference type="RefSeq" id="WP_002209474.1">
    <property type="nucleotide sequence ID" value="NZ_CP009792.1"/>
</dbReference>
<dbReference type="SMR" id="B1JQ46"/>
<dbReference type="GeneID" id="57974789"/>
<dbReference type="KEGG" id="ypy:YPK_4074"/>
<dbReference type="PATRIC" id="fig|502800.11.peg.423"/>
<dbReference type="GO" id="GO:0005829">
    <property type="term" value="C:cytosol"/>
    <property type="evidence" value="ECO:0007669"/>
    <property type="project" value="TreeGrafter"/>
</dbReference>
<dbReference type="GO" id="GO:0019843">
    <property type="term" value="F:rRNA binding"/>
    <property type="evidence" value="ECO:0007669"/>
    <property type="project" value="TreeGrafter"/>
</dbReference>
<dbReference type="GO" id="GO:0030697">
    <property type="term" value="F:tRNA (uracil(54)-C5)-methyltransferase activity, S-adenosyl methionine-dependent"/>
    <property type="evidence" value="ECO:0007669"/>
    <property type="project" value="UniProtKB-UniRule"/>
</dbReference>
<dbReference type="GO" id="GO:0000049">
    <property type="term" value="F:tRNA binding"/>
    <property type="evidence" value="ECO:0007669"/>
    <property type="project" value="TreeGrafter"/>
</dbReference>
<dbReference type="GO" id="GO:0030488">
    <property type="term" value="P:tRNA methylation"/>
    <property type="evidence" value="ECO:0007669"/>
    <property type="project" value="UniProtKB-UniRule"/>
</dbReference>
<dbReference type="CDD" id="cd02440">
    <property type="entry name" value="AdoMet_MTases"/>
    <property type="match status" value="1"/>
</dbReference>
<dbReference type="FunFam" id="2.40.50.1070:FF:000001">
    <property type="entry name" value="tRNA/tmRNA (uracil-C(5))-methyltransferase"/>
    <property type="match status" value="1"/>
</dbReference>
<dbReference type="FunFam" id="3.40.50.150:FF:000012">
    <property type="entry name" value="tRNA/tmRNA (uracil-C(5))-methyltransferase"/>
    <property type="match status" value="1"/>
</dbReference>
<dbReference type="Gene3D" id="2.40.50.1070">
    <property type="match status" value="1"/>
</dbReference>
<dbReference type="Gene3D" id="3.40.50.150">
    <property type="entry name" value="Vaccinia Virus protein VP39"/>
    <property type="match status" value="1"/>
</dbReference>
<dbReference type="HAMAP" id="MF_01011">
    <property type="entry name" value="RNA_methyltr_TrmA"/>
    <property type="match status" value="1"/>
</dbReference>
<dbReference type="InterPro" id="IPR030390">
    <property type="entry name" value="MeTrfase_TrmA_AS"/>
</dbReference>
<dbReference type="InterPro" id="IPR030391">
    <property type="entry name" value="MeTrfase_TrmA_CS"/>
</dbReference>
<dbReference type="InterPro" id="IPR029063">
    <property type="entry name" value="SAM-dependent_MTases_sf"/>
</dbReference>
<dbReference type="InterPro" id="IPR011869">
    <property type="entry name" value="TrmA_MeTrfase"/>
</dbReference>
<dbReference type="InterPro" id="IPR010280">
    <property type="entry name" value="U5_MeTrfase_fam"/>
</dbReference>
<dbReference type="NCBIfam" id="TIGR02143">
    <property type="entry name" value="trmA_only"/>
    <property type="match status" value="1"/>
</dbReference>
<dbReference type="PANTHER" id="PTHR47790">
    <property type="entry name" value="TRNA/TMRNA (URACIL-C(5))-METHYLTRANSFERASE"/>
    <property type="match status" value="1"/>
</dbReference>
<dbReference type="PANTHER" id="PTHR47790:SF2">
    <property type="entry name" value="TRNA_TMRNA (URACIL-C(5))-METHYLTRANSFERASE"/>
    <property type="match status" value="1"/>
</dbReference>
<dbReference type="Pfam" id="PF05958">
    <property type="entry name" value="tRNA_U5-meth_tr"/>
    <property type="match status" value="1"/>
</dbReference>
<dbReference type="SUPFAM" id="SSF53335">
    <property type="entry name" value="S-adenosyl-L-methionine-dependent methyltransferases"/>
    <property type="match status" value="1"/>
</dbReference>
<dbReference type="PROSITE" id="PS51687">
    <property type="entry name" value="SAM_MT_RNA_M5U"/>
    <property type="match status" value="1"/>
</dbReference>
<dbReference type="PROSITE" id="PS01230">
    <property type="entry name" value="TRMA_1"/>
    <property type="match status" value="1"/>
</dbReference>
<dbReference type="PROSITE" id="PS01231">
    <property type="entry name" value="TRMA_2"/>
    <property type="match status" value="1"/>
</dbReference>
<name>TRMA_YERPY</name>
<comment type="function">
    <text evidence="1">Dual-specificity methyltransferase that catalyzes the formation of 5-methyluridine at position 54 (m5U54) in all tRNAs, and that of position 341 (m5U341) in tmRNA (transfer-mRNA).</text>
</comment>
<comment type="catalytic activity">
    <reaction evidence="1">
        <text>uridine(54) in tRNA + S-adenosyl-L-methionine = 5-methyluridine(54) in tRNA + S-adenosyl-L-homocysteine + H(+)</text>
        <dbReference type="Rhea" id="RHEA:42712"/>
        <dbReference type="Rhea" id="RHEA-COMP:10167"/>
        <dbReference type="Rhea" id="RHEA-COMP:10193"/>
        <dbReference type="ChEBI" id="CHEBI:15378"/>
        <dbReference type="ChEBI" id="CHEBI:57856"/>
        <dbReference type="ChEBI" id="CHEBI:59789"/>
        <dbReference type="ChEBI" id="CHEBI:65315"/>
        <dbReference type="ChEBI" id="CHEBI:74447"/>
        <dbReference type="EC" id="2.1.1.35"/>
    </reaction>
</comment>
<comment type="catalytic activity">
    <reaction evidence="1">
        <text>uridine(341) in tmRNA + S-adenosyl-L-methionine = 5-methyluridine(341) in tmRNA + S-adenosyl-L-homocysteine + H(+)</text>
        <dbReference type="Rhea" id="RHEA:43612"/>
        <dbReference type="Rhea" id="RHEA-COMP:10630"/>
        <dbReference type="Rhea" id="RHEA-COMP:10631"/>
        <dbReference type="ChEBI" id="CHEBI:15378"/>
        <dbReference type="ChEBI" id="CHEBI:57856"/>
        <dbReference type="ChEBI" id="CHEBI:59789"/>
        <dbReference type="ChEBI" id="CHEBI:65315"/>
        <dbReference type="ChEBI" id="CHEBI:74447"/>
    </reaction>
</comment>
<comment type="similarity">
    <text evidence="1">Belongs to the class I-like SAM-binding methyltransferase superfamily. RNA M5U methyltransferase family. TrmA subfamily.</text>
</comment>
<sequence>MTPNILPIESYDHQLAEKSARLKAMMLPFQAPEPEIFRSPADHYRMRAEFRVWHDEDDLYHIMFDQQTKQRIRVEQFPVASRLINRLMDALMTAIRAEPLLRRKLFQIDYLSTLSGKLIASLLYHRQLDEEWQQKALELRDQLRAQGFDLQLIGRAAKTKIMLDHDYIDEVLPVAGREMIYRQVENSFTQPNAAVNIHMLEWALDVTQGATGDLLELYCGNGNFSLALARNFERVLATEIAKPSVAAAQYNIAANNIDNVQIIRMSAEEFTQAMQGVREFNRLKGIDLGSYNCETIFVDPPRSGLDHETVKLVQAYPRILYISCNPETLCANLEQLQHTHKISRLALFDQFPYTHHMECGVLLEKRH</sequence>
<keyword id="KW-0489">Methyltransferase</keyword>
<keyword id="KW-0949">S-adenosyl-L-methionine</keyword>
<keyword id="KW-0808">Transferase</keyword>
<keyword id="KW-0819">tRNA processing</keyword>
<protein>
    <recommendedName>
        <fullName evidence="1">tRNA/tmRNA (uracil-C(5))-methyltransferase</fullName>
        <ecNumber evidence="1">2.1.1.-</ecNumber>
        <ecNumber evidence="1">2.1.1.35</ecNumber>
    </recommendedName>
    <alternativeName>
        <fullName evidence="1">tRNA (uracil(54)-C(5))-methyltransferase</fullName>
    </alternativeName>
    <alternativeName>
        <fullName evidence="1">tRNA(m5U54)-methyltransferase</fullName>
        <shortName evidence="1">RUMT</shortName>
    </alternativeName>
    <alternativeName>
        <fullName evidence="1">tmRNA (uracil(341)-C(5))-methyltransferase</fullName>
    </alternativeName>
</protein>
<organism>
    <name type="scientific">Yersinia pseudotuberculosis serotype O:3 (strain YPIII)</name>
    <dbReference type="NCBI Taxonomy" id="502800"/>
    <lineage>
        <taxon>Bacteria</taxon>
        <taxon>Pseudomonadati</taxon>
        <taxon>Pseudomonadota</taxon>
        <taxon>Gammaproteobacteria</taxon>
        <taxon>Enterobacterales</taxon>
        <taxon>Yersiniaceae</taxon>
        <taxon>Yersinia</taxon>
    </lineage>
</organism>
<feature type="chain" id="PRO_1000198563" description="tRNA/tmRNA (uracil-C(5))-methyltransferase">
    <location>
        <begin position="1"/>
        <end position="367"/>
    </location>
</feature>
<feature type="active site" description="Nucleophile" evidence="1">
    <location>
        <position position="324"/>
    </location>
</feature>
<feature type="active site" description="Proton acceptor" evidence="1">
    <location>
        <position position="358"/>
    </location>
</feature>
<feature type="binding site" evidence="1">
    <location>
        <position position="190"/>
    </location>
    <ligand>
        <name>S-adenosyl-L-methionine</name>
        <dbReference type="ChEBI" id="CHEBI:59789"/>
    </ligand>
</feature>
<feature type="binding site" evidence="1">
    <location>
        <position position="218"/>
    </location>
    <ligand>
        <name>S-adenosyl-L-methionine</name>
        <dbReference type="ChEBI" id="CHEBI:59789"/>
    </ligand>
</feature>
<feature type="binding site" evidence="1">
    <location>
        <position position="223"/>
    </location>
    <ligand>
        <name>S-adenosyl-L-methionine</name>
        <dbReference type="ChEBI" id="CHEBI:59789"/>
    </ligand>
</feature>
<feature type="binding site" evidence="1">
    <location>
        <position position="239"/>
    </location>
    <ligand>
        <name>S-adenosyl-L-methionine</name>
        <dbReference type="ChEBI" id="CHEBI:59789"/>
    </ligand>
</feature>
<feature type="binding site" evidence="1">
    <location>
        <position position="299"/>
    </location>
    <ligand>
        <name>S-adenosyl-L-methionine</name>
        <dbReference type="ChEBI" id="CHEBI:59789"/>
    </ligand>
</feature>
<proteinExistence type="inferred from homology"/>
<gene>
    <name evidence="1" type="primary">trmA</name>
    <name type="ordered locus">YPK_4074</name>
</gene>
<accession>B1JQ46</accession>
<reference key="1">
    <citation type="submission" date="2008-02" db="EMBL/GenBank/DDBJ databases">
        <title>Complete sequence of Yersinia pseudotuberculosis YPIII.</title>
        <authorList>
            <consortium name="US DOE Joint Genome Institute"/>
            <person name="Copeland A."/>
            <person name="Lucas S."/>
            <person name="Lapidus A."/>
            <person name="Glavina del Rio T."/>
            <person name="Dalin E."/>
            <person name="Tice H."/>
            <person name="Bruce D."/>
            <person name="Goodwin L."/>
            <person name="Pitluck S."/>
            <person name="Munk A.C."/>
            <person name="Brettin T."/>
            <person name="Detter J.C."/>
            <person name="Han C."/>
            <person name="Tapia R."/>
            <person name="Schmutz J."/>
            <person name="Larimer F."/>
            <person name="Land M."/>
            <person name="Hauser L."/>
            <person name="Challacombe J.F."/>
            <person name="Green L."/>
            <person name="Lindler L.E."/>
            <person name="Nikolich M.P."/>
            <person name="Richardson P."/>
        </authorList>
    </citation>
    <scope>NUCLEOTIDE SEQUENCE [LARGE SCALE GENOMIC DNA]</scope>
    <source>
        <strain>YPIII</strain>
    </source>
</reference>
<evidence type="ECO:0000255" key="1">
    <source>
        <dbReference type="HAMAP-Rule" id="MF_01011"/>
    </source>
</evidence>